<reference key="1">
    <citation type="journal article" date="2005" name="Science">
        <title>Extensive DNA inversions in the B. fragilis genome control variable gene expression.</title>
        <authorList>
            <person name="Cerdeno-Tarraga A.-M."/>
            <person name="Patrick S."/>
            <person name="Crossman L.C."/>
            <person name="Blakely G."/>
            <person name="Abratt V."/>
            <person name="Lennard N."/>
            <person name="Poxton I."/>
            <person name="Duerden B."/>
            <person name="Harris B."/>
            <person name="Quail M.A."/>
            <person name="Barron A."/>
            <person name="Clark L."/>
            <person name="Corton C."/>
            <person name="Doggett J."/>
            <person name="Holden M.T.G."/>
            <person name="Larke N."/>
            <person name="Line A."/>
            <person name="Lord A."/>
            <person name="Norbertczak H."/>
            <person name="Ormond D."/>
            <person name="Price C."/>
            <person name="Rabbinowitsch E."/>
            <person name="Woodward J."/>
            <person name="Barrell B.G."/>
            <person name="Parkhill J."/>
        </authorList>
    </citation>
    <scope>NUCLEOTIDE SEQUENCE [LARGE SCALE GENOMIC DNA]</scope>
    <source>
        <strain>ATCC 25285 / DSM 2151 / CCUG 4856 / JCM 11019 / LMG 10263 / NCTC 9343 / Onslow / VPI 2553 / EN-2</strain>
    </source>
</reference>
<protein>
    <recommendedName>
        <fullName evidence="1">Tyrosine--tRNA ligase</fullName>
        <ecNumber evidence="1">6.1.1.1</ecNumber>
    </recommendedName>
    <alternativeName>
        <fullName evidence="1">Tyrosyl-tRNA synthetase</fullName>
        <shortName evidence="1">TyrRS</shortName>
    </alternativeName>
</protein>
<sequence>MNFVEELRWRGMVHDMMPGTEELLAKEQVTAYVGIDPTADSLHIGHLCGVMILRHFQRCGHKPLALIGGATGMIGDPSGKSAERNLLDEETLRHNQACIKKQLAKFLDFESDAPNRAELVNNYDWMKEFTFLDFAREVGKHITVNYMMAKESVKKRLNGEARDGLSFTEFTYQLLQGYDFLHLYETKGCKLQMGGSDQWGNITTGTELIRRTNGGEAYALTCPLITKADGGKFGKTESGNIWLDPRYTSPYKFYQFWLNVSDADAERYIKIFTSLDKAEIDGLIAEHNEAPHLRVLQKRLAKEVTVMVHSEEDYNAAVDASNILFGNATSDALKKLDEDTLLAVFEGVPQFEISRDALAEGVKAVDLFVDNAAVFASKGEMRKLVQGGGVSLNKEKLAAFDQVITTADLLDEKYLLVQRGKKNYYLIIAK</sequence>
<name>SYY_BACFN</name>
<proteinExistence type="inferred from homology"/>
<gene>
    <name evidence="1" type="primary">tyrS</name>
    <name type="ordered locus">BF0079</name>
</gene>
<organism>
    <name type="scientific">Bacteroides fragilis (strain ATCC 25285 / DSM 2151 / CCUG 4856 / JCM 11019 / LMG 10263 / NCTC 9343 / Onslow / VPI 2553 / EN-2)</name>
    <dbReference type="NCBI Taxonomy" id="272559"/>
    <lineage>
        <taxon>Bacteria</taxon>
        <taxon>Pseudomonadati</taxon>
        <taxon>Bacteroidota</taxon>
        <taxon>Bacteroidia</taxon>
        <taxon>Bacteroidales</taxon>
        <taxon>Bacteroidaceae</taxon>
        <taxon>Bacteroides</taxon>
    </lineage>
</organism>
<feature type="chain" id="PRO_0000234679" description="Tyrosine--tRNA ligase">
    <location>
        <begin position="1"/>
        <end position="430"/>
    </location>
</feature>
<feature type="domain" description="S4 RNA-binding" evidence="1">
    <location>
        <begin position="362"/>
        <end position="429"/>
    </location>
</feature>
<feature type="short sequence motif" description="'HIGH' region">
    <location>
        <begin position="37"/>
        <end position="46"/>
    </location>
</feature>
<feature type="short sequence motif" description="'KMSKS' region">
    <location>
        <begin position="232"/>
        <end position="236"/>
    </location>
</feature>
<feature type="binding site" evidence="1">
    <location>
        <position position="32"/>
    </location>
    <ligand>
        <name>L-tyrosine</name>
        <dbReference type="ChEBI" id="CHEBI:58315"/>
    </ligand>
</feature>
<feature type="binding site" evidence="1">
    <location>
        <position position="172"/>
    </location>
    <ligand>
        <name>L-tyrosine</name>
        <dbReference type="ChEBI" id="CHEBI:58315"/>
    </ligand>
</feature>
<feature type="binding site" evidence="1">
    <location>
        <position position="176"/>
    </location>
    <ligand>
        <name>L-tyrosine</name>
        <dbReference type="ChEBI" id="CHEBI:58315"/>
    </ligand>
</feature>
<feature type="binding site" evidence="1">
    <location>
        <position position="235"/>
    </location>
    <ligand>
        <name>ATP</name>
        <dbReference type="ChEBI" id="CHEBI:30616"/>
    </ligand>
</feature>
<evidence type="ECO:0000255" key="1">
    <source>
        <dbReference type="HAMAP-Rule" id="MF_02006"/>
    </source>
</evidence>
<keyword id="KW-0030">Aminoacyl-tRNA synthetase</keyword>
<keyword id="KW-0067">ATP-binding</keyword>
<keyword id="KW-0963">Cytoplasm</keyword>
<keyword id="KW-0436">Ligase</keyword>
<keyword id="KW-0547">Nucleotide-binding</keyword>
<keyword id="KW-0648">Protein biosynthesis</keyword>
<keyword id="KW-0694">RNA-binding</keyword>
<accession>Q5LJ19</accession>
<comment type="function">
    <text evidence="1">Catalyzes the attachment of tyrosine to tRNA(Tyr) in a two-step reaction: tyrosine is first activated by ATP to form Tyr-AMP and then transferred to the acceptor end of tRNA(Tyr).</text>
</comment>
<comment type="catalytic activity">
    <reaction evidence="1">
        <text>tRNA(Tyr) + L-tyrosine + ATP = L-tyrosyl-tRNA(Tyr) + AMP + diphosphate + H(+)</text>
        <dbReference type="Rhea" id="RHEA:10220"/>
        <dbReference type="Rhea" id="RHEA-COMP:9706"/>
        <dbReference type="Rhea" id="RHEA-COMP:9707"/>
        <dbReference type="ChEBI" id="CHEBI:15378"/>
        <dbReference type="ChEBI" id="CHEBI:30616"/>
        <dbReference type="ChEBI" id="CHEBI:33019"/>
        <dbReference type="ChEBI" id="CHEBI:58315"/>
        <dbReference type="ChEBI" id="CHEBI:78442"/>
        <dbReference type="ChEBI" id="CHEBI:78536"/>
        <dbReference type="ChEBI" id="CHEBI:456215"/>
        <dbReference type="EC" id="6.1.1.1"/>
    </reaction>
</comment>
<comment type="subunit">
    <text evidence="1">Homodimer.</text>
</comment>
<comment type="subcellular location">
    <subcellularLocation>
        <location evidence="1">Cytoplasm</location>
    </subcellularLocation>
</comment>
<comment type="similarity">
    <text evidence="1">Belongs to the class-I aminoacyl-tRNA synthetase family. TyrS type 1 subfamily.</text>
</comment>
<dbReference type="EC" id="6.1.1.1" evidence="1"/>
<dbReference type="EMBL" id="CR626927">
    <property type="protein sequence ID" value="CAH05857.1"/>
    <property type="molecule type" value="Genomic_DNA"/>
</dbReference>
<dbReference type="RefSeq" id="WP_010991893.1">
    <property type="nucleotide sequence ID" value="NZ_UFTH01000001.1"/>
</dbReference>
<dbReference type="SMR" id="Q5LJ19"/>
<dbReference type="PaxDb" id="272559-BF9343_0078"/>
<dbReference type="GeneID" id="60367239"/>
<dbReference type="KEGG" id="bfs:BF9343_0078"/>
<dbReference type="eggNOG" id="COG0162">
    <property type="taxonomic scope" value="Bacteria"/>
</dbReference>
<dbReference type="HOGENOM" id="CLU_024003_0_3_10"/>
<dbReference type="Proteomes" id="UP000006731">
    <property type="component" value="Chromosome"/>
</dbReference>
<dbReference type="GO" id="GO:0005829">
    <property type="term" value="C:cytosol"/>
    <property type="evidence" value="ECO:0007669"/>
    <property type="project" value="TreeGrafter"/>
</dbReference>
<dbReference type="GO" id="GO:0005524">
    <property type="term" value="F:ATP binding"/>
    <property type="evidence" value="ECO:0007669"/>
    <property type="project" value="UniProtKB-UniRule"/>
</dbReference>
<dbReference type="GO" id="GO:0003723">
    <property type="term" value="F:RNA binding"/>
    <property type="evidence" value="ECO:0007669"/>
    <property type="project" value="UniProtKB-KW"/>
</dbReference>
<dbReference type="GO" id="GO:0004831">
    <property type="term" value="F:tyrosine-tRNA ligase activity"/>
    <property type="evidence" value="ECO:0007669"/>
    <property type="project" value="UniProtKB-UniRule"/>
</dbReference>
<dbReference type="GO" id="GO:0006437">
    <property type="term" value="P:tyrosyl-tRNA aminoacylation"/>
    <property type="evidence" value="ECO:0007669"/>
    <property type="project" value="UniProtKB-UniRule"/>
</dbReference>
<dbReference type="CDD" id="cd00805">
    <property type="entry name" value="TyrRS_core"/>
    <property type="match status" value="1"/>
</dbReference>
<dbReference type="FunFam" id="1.10.240.10:FF:000001">
    <property type="entry name" value="Tyrosine--tRNA ligase"/>
    <property type="match status" value="1"/>
</dbReference>
<dbReference type="FunFam" id="3.10.290.10:FF:000014">
    <property type="entry name" value="Tyrosine--tRNA ligase"/>
    <property type="match status" value="1"/>
</dbReference>
<dbReference type="FunFam" id="3.40.50.620:FF:000008">
    <property type="entry name" value="Tyrosine--tRNA ligase"/>
    <property type="match status" value="1"/>
</dbReference>
<dbReference type="Gene3D" id="3.40.50.620">
    <property type="entry name" value="HUPs"/>
    <property type="match status" value="1"/>
</dbReference>
<dbReference type="Gene3D" id="3.10.290.10">
    <property type="entry name" value="RNA-binding S4 domain"/>
    <property type="match status" value="1"/>
</dbReference>
<dbReference type="Gene3D" id="1.10.240.10">
    <property type="entry name" value="Tyrosyl-Transfer RNA Synthetase"/>
    <property type="match status" value="1"/>
</dbReference>
<dbReference type="HAMAP" id="MF_02006">
    <property type="entry name" value="Tyr_tRNA_synth_type1"/>
    <property type="match status" value="1"/>
</dbReference>
<dbReference type="InterPro" id="IPR001412">
    <property type="entry name" value="aa-tRNA-synth_I_CS"/>
</dbReference>
<dbReference type="InterPro" id="IPR002305">
    <property type="entry name" value="aa-tRNA-synth_Ic"/>
</dbReference>
<dbReference type="InterPro" id="IPR014729">
    <property type="entry name" value="Rossmann-like_a/b/a_fold"/>
</dbReference>
<dbReference type="InterPro" id="IPR036986">
    <property type="entry name" value="S4_RNA-bd_sf"/>
</dbReference>
<dbReference type="InterPro" id="IPR054608">
    <property type="entry name" value="SYY-like_C"/>
</dbReference>
<dbReference type="InterPro" id="IPR002307">
    <property type="entry name" value="Tyr-tRNA-ligase"/>
</dbReference>
<dbReference type="InterPro" id="IPR024088">
    <property type="entry name" value="Tyr-tRNA-ligase_bac-type"/>
</dbReference>
<dbReference type="InterPro" id="IPR024107">
    <property type="entry name" value="Tyr-tRNA-ligase_bac_1"/>
</dbReference>
<dbReference type="NCBIfam" id="TIGR00234">
    <property type="entry name" value="tyrS"/>
    <property type="match status" value="1"/>
</dbReference>
<dbReference type="PANTHER" id="PTHR11766:SF0">
    <property type="entry name" value="TYROSINE--TRNA LIGASE, MITOCHONDRIAL"/>
    <property type="match status" value="1"/>
</dbReference>
<dbReference type="PANTHER" id="PTHR11766">
    <property type="entry name" value="TYROSYL-TRNA SYNTHETASE"/>
    <property type="match status" value="1"/>
</dbReference>
<dbReference type="Pfam" id="PF22421">
    <property type="entry name" value="SYY_C-terminal"/>
    <property type="match status" value="1"/>
</dbReference>
<dbReference type="Pfam" id="PF00579">
    <property type="entry name" value="tRNA-synt_1b"/>
    <property type="match status" value="1"/>
</dbReference>
<dbReference type="PRINTS" id="PR01040">
    <property type="entry name" value="TRNASYNTHTYR"/>
</dbReference>
<dbReference type="SUPFAM" id="SSF55174">
    <property type="entry name" value="Alpha-L RNA-binding motif"/>
    <property type="match status" value="1"/>
</dbReference>
<dbReference type="SUPFAM" id="SSF52374">
    <property type="entry name" value="Nucleotidylyl transferase"/>
    <property type="match status" value="1"/>
</dbReference>
<dbReference type="PROSITE" id="PS00178">
    <property type="entry name" value="AA_TRNA_LIGASE_I"/>
    <property type="match status" value="1"/>
</dbReference>
<dbReference type="PROSITE" id="PS50889">
    <property type="entry name" value="S4"/>
    <property type="match status" value="1"/>
</dbReference>